<sequence length="439" mass="49309">MRHFFKLGLVSAAVLGSQMTLANDFWSQDRQWLLGDWGGERQQLEKQGYKFTASIMSQAATNLDGGYNDSNTLENAGQLTLGANFDLSKIAGWEDTTAAIMITKRDGNSLTLERIKDPRSTTLGNTQEIYGRGKIWRLTQAWVKKGFNDNTVQFKIGRMGMSDDFNSSQCEFQNLLLCGGQLGKSIGSIWYNWPVGLWGTNVKYQFAPEWTLGLGVYEVNPDNVKTQSNSDGFNLDMNNVKGATIPVELAWKPKLAMFNGLPGEYKVGALYSTADANDVGTVSKVHDSKHSFWINTQQQLTQHNDNAKRGLFVSFNGVVNDKATTMVESTQQLALWYKGPFDSRPNDSIGFGLANYVVNKRVRDRQIATNESRGYYEYDDLASNYVPIQHDELNVELNYTYQWSPAVMLRPNIQYIHQPAGVKEVDDAWVAGLSMRLNF</sequence>
<accession>Q43923</accession>
<reference key="1">
    <citation type="journal article" date="1995" name="J. Bacteriol.">
        <title>Unusual ancestry of dehydratases associated with quinate catabolism in Acinetobacter calcoaceticus.</title>
        <authorList>
            <person name="Elsemore D.A."/>
            <person name="Ornston L.N."/>
        </authorList>
    </citation>
    <scope>NUCLEOTIDE SEQUENCE [GENOMIC DNA]</scope>
</reference>
<reference key="2">
    <citation type="journal article" date="2004" name="Nucleic Acids Res.">
        <title>Unique features revealed by the genome sequence of Acinetobacter sp. ADP1, a versatile and naturally transformation competent bacterium.</title>
        <authorList>
            <person name="Barbe V."/>
            <person name="Vallenet D."/>
            <person name="Fonknechten N."/>
            <person name="Kreimeyer A."/>
            <person name="Oztas S."/>
            <person name="Labarre L."/>
            <person name="Cruveiller S."/>
            <person name="Robert C."/>
            <person name="Duprat S."/>
            <person name="Wincker P."/>
            <person name="Ornston L.N."/>
            <person name="Weissenbach J."/>
            <person name="Marliere P."/>
            <person name="Cohen G.N."/>
            <person name="Medigue C."/>
        </authorList>
    </citation>
    <scope>NUCLEOTIDE SEQUENCE [LARGE SCALE GENOMIC DNA]</scope>
    <source>
        <strain>ATCC 33305 / BD413 / ADP1</strain>
    </source>
</reference>
<feature type="signal peptide" evidence="1">
    <location>
        <begin position="1"/>
        <end position="22"/>
    </location>
</feature>
<feature type="chain" id="PRO_0000025210" description="Putative porin QuiX">
    <location>
        <begin position="23"/>
        <end position="439"/>
    </location>
</feature>
<evidence type="ECO:0000255" key="1"/>
<evidence type="ECO:0000305" key="2"/>
<keyword id="KW-0998">Cell outer membrane</keyword>
<keyword id="KW-0406">Ion transport</keyword>
<keyword id="KW-0472">Membrane</keyword>
<keyword id="KW-0626">Porin</keyword>
<keyword id="KW-0732">Signal</keyword>
<keyword id="KW-0812">Transmembrane</keyword>
<keyword id="KW-1134">Transmembrane beta strand</keyword>
<keyword id="KW-0813">Transport</keyword>
<name>QUIX_ACIAD</name>
<comment type="function">
    <text>Could be involved in the transport of quinate or shikimate.</text>
</comment>
<comment type="subcellular location">
    <subcellularLocation>
        <location>Cell outer membrane</location>
        <topology>Multi-pass membrane protein</topology>
    </subcellularLocation>
</comment>
<comment type="similarity">
    <text evidence="2">Belongs to the OprB family.</text>
</comment>
<gene>
    <name type="primary">quiX</name>
    <name type="ordered locus">ACIAD1715</name>
</gene>
<proteinExistence type="inferred from homology"/>
<organism>
    <name type="scientific">Acinetobacter baylyi (strain ATCC 33305 / BD413 / ADP1)</name>
    <dbReference type="NCBI Taxonomy" id="62977"/>
    <lineage>
        <taxon>Bacteria</taxon>
        <taxon>Pseudomonadati</taxon>
        <taxon>Pseudomonadota</taxon>
        <taxon>Gammaproteobacteria</taxon>
        <taxon>Moraxellales</taxon>
        <taxon>Moraxellaceae</taxon>
        <taxon>Acinetobacter</taxon>
    </lineage>
</organism>
<dbReference type="EMBL" id="L05770">
    <property type="protein sequence ID" value="AAC37160.1"/>
    <property type="molecule type" value="Genomic_DNA"/>
</dbReference>
<dbReference type="EMBL" id="CR543861">
    <property type="protein sequence ID" value="CAG68557.1"/>
    <property type="molecule type" value="Genomic_DNA"/>
</dbReference>
<dbReference type="PIR" id="I39524">
    <property type="entry name" value="I39524"/>
</dbReference>
<dbReference type="RefSeq" id="WP_004926653.1">
    <property type="nucleotide sequence ID" value="NC_005966.1"/>
</dbReference>
<dbReference type="SMR" id="Q43923"/>
<dbReference type="STRING" id="202950.GCA_001485005_03093"/>
<dbReference type="GeneID" id="45234102"/>
<dbReference type="KEGG" id="aci:ACIAD1715"/>
<dbReference type="eggNOG" id="COG3659">
    <property type="taxonomic scope" value="Bacteria"/>
</dbReference>
<dbReference type="HOGENOM" id="CLU_029684_1_0_6"/>
<dbReference type="OrthoDB" id="545475at2"/>
<dbReference type="BioCyc" id="ASP62977:ACIAD_RS07905-MONOMER"/>
<dbReference type="Proteomes" id="UP000000430">
    <property type="component" value="Chromosome"/>
</dbReference>
<dbReference type="GO" id="GO:0009279">
    <property type="term" value="C:cell outer membrane"/>
    <property type="evidence" value="ECO:0007669"/>
    <property type="project" value="UniProtKB-SubCell"/>
</dbReference>
<dbReference type="GO" id="GO:0046930">
    <property type="term" value="C:pore complex"/>
    <property type="evidence" value="ECO:0007669"/>
    <property type="project" value="UniProtKB-KW"/>
</dbReference>
<dbReference type="GO" id="GO:0015288">
    <property type="term" value="F:porin activity"/>
    <property type="evidence" value="ECO:0007669"/>
    <property type="project" value="UniProtKB-KW"/>
</dbReference>
<dbReference type="GO" id="GO:0008643">
    <property type="term" value="P:carbohydrate transport"/>
    <property type="evidence" value="ECO:0007669"/>
    <property type="project" value="InterPro"/>
</dbReference>
<dbReference type="GO" id="GO:0006811">
    <property type="term" value="P:monoatomic ion transport"/>
    <property type="evidence" value="ECO:0007669"/>
    <property type="project" value="UniProtKB-KW"/>
</dbReference>
<dbReference type="Gene3D" id="2.40.160.180">
    <property type="entry name" value="Carbohydrate-selective porin OprB"/>
    <property type="match status" value="1"/>
</dbReference>
<dbReference type="InterPro" id="IPR007049">
    <property type="entry name" value="Carb-sel_porin_OprB"/>
</dbReference>
<dbReference type="InterPro" id="IPR052932">
    <property type="entry name" value="OprB_Porin"/>
</dbReference>
<dbReference type="InterPro" id="IPR038673">
    <property type="entry name" value="OprB_sf"/>
</dbReference>
<dbReference type="PANTHER" id="PTHR37944">
    <property type="entry name" value="PORIN B"/>
    <property type="match status" value="1"/>
</dbReference>
<dbReference type="PANTHER" id="PTHR37944:SF1">
    <property type="entry name" value="PORIN B"/>
    <property type="match status" value="1"/>
</dbReference>
<dbReference type="Pfam" id="PF04966">
    <property type="entry name" value="OprB"/>
    <property type="match status" value="1"/>
</dbReference>
<protein>
    <recommendedName>
        <fullName>Putative porin QuiX</fullName>
    </recommendedName>
</protein>